<evidence type="ECO:0000250" key="1"/>
<evidence type="ECO:0000269" key="2">
    <source>
    </source>
</evidence>
<evidence type="ECO:0000305" key="3"/>
<dbReference type="EMBL" id="AF094580">
    <property type="protein sequence ID" value="AAC63380.1"/>
    <property type="molecule type" value="mRNA"/>
</dbReference>
<dbReference type="EMBL" id="BC102547">
    <property type="protein sequence ID" value="AAI02548.1"/>
    <property type="molecule type" value="mRNA"/>
</dbReference>
<dbReference type="RefSeq" id="NP_776790.1">
    <property type="nucleotide sequence ID" value="NM_174365.2"/>
</dbReference>
<dbReference type="FunCoup" id="O77801">
    <property type="interactions" value="104"/>
</dbReference>
<dbReference type="STRING" id="9913.ENSBTAP00000027848"/>
<dbReference type="PaxDb" id="9913-ENSBTAP00000027848"/>
<dbReference type="Ensembl" id="ENSBTAT00000027848.5">
    <property type="protein sequence ID" value="ENSBTAP00000027848.4"/>
    <property type="gene ID" value="ENSBTAG00000025775.4"/>
</dbReference>
<dbReference type="GeneID" id="281870"/>
<dbReference type="KEGG" id="bta:281870"/>
<dbReference type="CTD" id="3640"/>
<dbReference type="VEuPathDB" id="HostDB:ENSBTAG00000025775"/>
<dbReference type="VGNC" id="VGNC:106785">
    <property type="gene designation" value="INSL3"/>
</dbReference>
<dbReference type="eggNOG" id="ENOG502TFQI">
    <property type="taxonomic scope" value="Eukaryota"/>
</dbReference>
<dbReference type="GeneTree" id="ENSGT00940000163613"/>
<dbReference type="HOGENOM" id="CLU_164865_0_0_1"/>
<dbReference type="InParanoid" id="O77801"/>
<dbReference type="OMA" id="NPAHHCC"/>
<dbReference type="OrthoDB" id="9448185at2759"/>
<dbReference type="TreeFam" id="TF106361"/>
<dbReference type="Reactome" id="R-BTA-418555">
    <property type="pathway name" value="G alpha (s) signalling events"/>
</dbReference>
<dbReference type="Reactome" id="R-BTA-444821">
    <property type="pathway name" value="Relaxin receptors"/>
</dbReference>
<dbReference type="Proteomes" id="UP000009136">
    <property type="component" value="Chromosome 7"/>
</dbReference>
<dbReference type="Bgee" id="ENSBTAG00000025775">
    <property type="expression patterns" value="Expressed in theca cell and 77 other cell types or tissues"/>
</dbReference>
<dbReference type="GO" id="GO:0005615">
    <property type="term" value="C:extracellular space"/>
    <property type="evidence" value="ECO:0000318"/>
    <property type="project" value="GO_Central"/>
</dbReference>
<dbReference type="GO" id="GO:0005179">
    <property type="term" value="F:hormone activity"/>
    <property type="evidence" value="ECO:0007669"/>
    <property type="project" value="UniProtKB-KW"/>
</dbReference>
<dbReference type="GO" id="GO:0002020">
    <property type="term" value="F:protease binding"/>
    <property type="evidence" value="ECO:0007669"/>
    <property type="project" value="Ensembl"/>
</dbReference>
<dbReference type="GO" id="GO:0007193">
    <property type="term" value="P:adenylate cyclase-inhibiting G protein-coupled receptor signaling pathway"/>
    <property type="evidence" value="ECO:0000318"/>
    <property type="project" value="GO_Central"/>
</dbReference>
<dbReference type="GO" id="GO:0010634">
    <property type="term" value="P:positive regulation of epithelial cell migration"/>
    <property type="evidence" value="ECO:0007669"/>
    <property type="project" value="Ensembl"/>
</dbReference>
<dbReference type="GO" id="GO:0090303">
    <property type="term" value="P:positive regulation of wound healing"/>
    <property type="evidence" value="ECO:0007669"/>
    <property type="project" value="Ensembl"/>
</dbReference>
<dbReference type="CDD" id="cd04365">
    <property type="entry name" value="IlGF_relaxin_like"/>
    <property type="match status" value="1"/>
</dbReference>
<dbReference type="Gene3D" id="1.10.100.10">
    <property type="entry name" value="Insulin-like"/>
    <property type="match status" value="1"/>
</dbReference>
<dbReference type="InterPro" id="IPR043387">
    <property type="entry name" value="INSL3/INSL4"/>
</dbReference>
<dbReference type="InterPro" id="IPR016179">
    <property type="entry name" value="Insulin-like"/>
</dbReference>
<dbReference type="InterPro" id="IPR036438">
    <property type="entry name" value="Insulin-like_sf"/>
</dbReference>
<dbReference type="InterPro" id="IPR022353">
    <property type="entry name" value="Insulin_CS"/>
</dbReference>
<dbReference type="PANTHER" id="PTHR10423">
    <property type="entry name" value="INSULIN-LIKE 3"/>
    <property type="match status" value="1"/>
</dbReference>
<dbReference type="PANTHER" id="PTHR10423:SF3">
    <property type="entry name" value="INSULIN-LIKE 3"/>
    <property type="match status" value="1"/>
</dbReference>
<dbReference type="Pfam" id="PF00049">
    <property type="entry name" value="Insulin"/>
    <property type="match status" value="1"/>
</dbReference>
<dbReference type="SMART" id="SM00078">
    <property type="entry name" value="IlGF"/>
    <property type="match status" value="1"/>
</dbReference>
<dbReference type="SUPFAM" id="SSF56994">
    <property type="entry name" value="Insulin-like"/>
    <property type="match status" value="1"/>
</dbReference>
<dbReference type="PROSITE" id="PS00262">
    <property type="entry name" value="INSULIN"/>
    <property type="match status" value="1"/>
</dbReference>
<name>INSL3_BOVIN</name>
<comment type="function">
    <text evidence="1">Seems to play a role in testicular function. May be a trophic hormone with a role in testicular descent in fetal life. Is a ligand for LGR8 receptor (By similarity).</text>
</comment>
<comment type="subunit">
    <text>Heterodimer of a B chain and an A chain linked by two disulfide bonds. 20% of B chains include an extra N-terminal pentapeptide.</text>
</comment>
<comment type="subcellular location">
    <subcellularLocation>
        <location evidence="1">Secreted</location>
    </subcellularLocation>
</comment>
<comment type="tissue specificity">
    <text>Expressed exclusively in Leydig cells of the testis.</text>
</comment>
<comment type="mass spectrometry" mass="4885.5" method="MALDI" evidence="2">
    <molecule>Insulin-like 3 B' chain</molecule>
    <text>With 2 artifactual S-carboxymethylcysteines.</text>
</comment>
<comment type="mass spectrometry" mass="4501.5" method="MALDI" evidence="2">
    <molecule>Insulin-like 3 B chain</molecule>
    <text>With pyrrolidone carboxylic acid at Gln-27 and 2 artifactual S-carboxymethylcysteines.</text>
</comment>
<comment type="mass spectrometry" mass="3028.0" method="MALDI" evidence="2">
    <molecule>Insulin-like 3 A chain</molecule>
    <text>With 4 artifactual S-carboxymethylcysteines.</text>
</comment>
<comment type="similarity">
    <text evidence="3">Belongs to the insulin family.</text>
</comment>
<accession>O77801</accession>
<accession>Q3T065</accession>
<reference key="1">
    <citation type="journal article" date="1996" name="Biol. Reprod.">
        <title>Relaxin-like factor gene is highly expressed in the bovine ovary of the cycle and pregnancy: sequence and messenger ribonucleic acid analysis.</title>
        <authorList>
            <person name="Bathgate R.A.D."/>
            <person name="Balvers M."/>
            <person name="Hunt N."/>
            <person name="Ivell R."/>
        </authorList>
    </citation>
    <scope>NUCLEOTIDE SEQUENCE [MRNA]</scope>
    <source>
        <tissue>Testis</tissue>
    </source>
</reference>
<reference key="2">
    <citation type="submission" date="2005-08" db="EMBL/GenBank/DDBJ databases">
        <authorList>
            <consortium name="NIH - Mammalian Gene Collection (MGC) project"/>
        </authorList>
    </citation>
    <scope>NUCLEOTIDE SEQUENCE [LARGE SCALE MRNA]</scope>
    <source>
        <strain>Crossbred X Angus</strain>
        <tissue>Liver</tissue>
    </source>
</reference>
<reference key="3">
    <citation type="journal article" date="2002" name="Biochemistry">
        <title>The primary structure and the disulfide links of the bovine relaxin-like factor (RLF).</title>
        <authorList>
            <person name="Bullesbach E.E."/>
            <person name="Schwabe C."/>
        </authorList>
    </citation>
    <scope>PROTEIN SEQUENCE OF 22-66 AND 107-132</scope>
    <scope>PYROGLUTAMATE FORMATION AT GLN-27</scope>
    <scope>MASS SPECTROMETRY</scope>
    <scope>DISULFIDE BONDS</scope>
</reference>
<protein>
    <recommendedName>
        <fullName>Insulin-like 3</fullName>
    </recommendedName>
    <alternativeName>
        <fullName>Leydig insulin-like peptide</fullName>
        <shortName>Ley-I-L</shortName>
    </alternativeName>
    <alternativeName>
        <fullName>Relaxin-like factor</fullName>
    </alternativeName>
    <component>
        <recommendedName>
            <fullName>Insulin-like 3 B' chain</fullName>
        </recommendedName>
    </component>
    <component>
        <recommendedName>
            <fullName>Insulin-like 3 B chain</fullName>
        </recommendedName>
    </component>
    <component>
        <recommendedName>
            <fullName>Insulin-like 3 A chain</fullName>
        </recommendedName>
    </component>
</protein>
<organism>
    <name type="scientific">Bos taurus</name>
    <name type="common">Bovine</name>
    <dbReference type="NCBI Taxonomy" id="9913"/>
    <lineage>
        <taxon>Eukaryota</taxon>
        <taxon>Metazoa</taxon>
        <taxon>Chordata</taxon>
        <taxon>Craniata</taxon>
        <taxon>Vertebrata</taxon>
        <taxon>Euteleostomi</taxon>
        <taxon>Mammalia</taxon>
        <taxon>Eutheria</taxon>
        <taxon>Laurasiatheria</taxon>
        <taxon>Artiodactyla</taxon>
        <taxon>Ruminantia</taxon>
        <taxon>Pecora</taxon>
        <taxon>Bovidae</taxon>
        <taxon>Bovinae</taxon>
        <taxon>Bos</taxon>
    </lineage>
</organism>
<gene>
    <name type="primary">INSL3</name>
    <name type="synonym">RLF</name>
</gene>
<keyword id="KW-0165">Cleavage on pair of basic residues</keyword>
<keyword id="KW-0903">Direct protein sequencing</keyword>
<keyword id="KW-1015">Disulfide bond</keyword>
<keyword id="KW-0372">Hormone</keyword>
<keyword id="KW-0873">Pyrrolidone carboxylic acid</keyword>
<keyword id="KW-1185">Reference proteome</keyword>
<keyword id="KW-0964">Secreted</keyword>
<keyword id="KW-0732">Signal</keyword>
<proteinExistence type="evidence at protein level"/>
<sequence length="132" mass="14378">MDRRPLTWALVLLGPALAIALGPAAAQEAPEKLCGHHFVRALVRLCGGPRWSSEEDGRPVAGGDRELLRWLEGQHLLHGLMASGDPVLVLAPQPLPQASRHHHHRRATAINPARHCCLSGCTRQDLLTLCPH</sequence>
<feature type="signal peptide" evidence="2">
    <location>
        <begin position="1"/>
        <end position="21"/>
    </location>
</feature>
<feature type="peptide" id="PRO_0000016130" description="Insulin-like 3 B' chain">
    <location>
        <begin position="22"/>
        <end position="66"/>
    </location>
</feature>
<feature type="peptide" id="PRO_0000016131" description="Insulin-like 3 B chain">
    <location>
        <begin position="27"/>
        <end position="66"/>
    </location>
</feature>
<feature type="propeptide" id="PRO_0000016132" description="C peptide like">
    <location>
        <begin position="67"/>
        <end position="104"/>
    </location>
</feature>
<feature type="peptide" id="PRO_0000016133" description="Insulin-like 3 A chain">
    <location>
        <begin position="107"/>
        <end position="132"/>
    </location>
</feature>
<feature type="modified residue" description="Pyrrolidone carboxylic acid" evidence="2">
    <location>
        <position position="27"/>
    </location>
</feature>
<feature type="disulfide bond" description="Interchain (between B and A chains)" evidence="2">
    <location>
        <begin position="34"/>
        <end position="117"/>
    </location>
</feature>
<feature type="disulfide bond" description="Interchain (between B and A chains)" evidence="2">
    <location>
        <begin position="46"/>
        <end position="130"/>
    </location>
</feature>
<feature type="disulfide bond" evidence="2">
    <location>
        <begin position="116"/>
        <end position="121"/>
    </location>
</feature>